<organismHost>
    <name type="scientific">Antilocapra americana</name>
    <name type="common">Pronghorn</name>
    <dbReference type="NCBI Taxonomy" id="9891"/>
</organismHost>
<organismHost>
    <name type="scientific">Bos taurus</name>
    <name type="common">Bovine</name>
    <dbReference type="NCBI Taxonomy" id="9913"/>
</organismHost>
<organismHost>
    <name type="scientific">Capra hircus</name>
    <name type="common">Goat</name>
    <dbReference type="NCBI Taxonomy" id="9925"/>
</organismHost>
<organismHost>
    <name type="scientific">Culicoides variipennis</name>
    <name type="common">Biting midge</name>
    <dbReference type="NCBI Taxonomy" id="46212"/>
</organismHost>
<organismHost>
    <name type="scientific">Ovis aries</name>
    <name type="common">Sheep</name>
    <dbReference type="NCBI Taxonomy" id="9940"/>
</organismHost>
<proteinExistence type="evidence at protein level"/>
<feature type="chain" id="PRO_0000222705" description="Core protein VP4">
    <location>
        <begin position="1"/>
        <end position="644"/>
    </location>
</feature>
<feature type="strand" evidence="4">
    <location>
        <begin position="7"/>
        <end position="10"/>
    </location>
</feature>
<feature type="turn" evidence="4">
    <location>
        <begin position="12"/>
        <end position="14"/>
    </location>
</feature>
<feature type="helix" evidence="4">
    <location>
        <begin position="15"/>
        <end position="18"/>
    </location>
</feature>
<feature type="strand" evidence="4">
    <location>
        <begin position="21"/>
        <end position="23"/>
    </location>
</feature>
<feature type="strand" evidence="4">
    <location>
        <begin position="25"/>
        <end position="27"/>
    </location>
</feature>
<feature type="helix" evidence="4">
    <location>
        <begin position="34"/>
        <end position="41"/>
    </location>
</feature>
<feature type="strand" evidence="4">
    <location>
        <begin position="48"/>
        <end position="52"/>
    </location>
</feature>
<feature type="helix" evidence="4">
    <location>
        <begin position="59"/>
        <end position="64"/>
    </location>
</feature>
<feature type="strand" evidence="4">
    <location>
        <begin position="67"/>
        <end position="77"/>
    </location>
</feature>
<feature type="strand" evidence="4">
    <location>
        <begin position="79"/>
        <end position="84"/>
    </location>
</feature>
<feature type="strand" evidence="4">
    <location>
        <begin position="86"/>
        <end position="88"/>
    </location>
</feature>
<feature type="turn" evidence="4">
    <location>
        <begin position="91"/>
        <end position="95"/>
    </location>
</feature>
<feature type="helix" evidence="4">
    <location>
        <begin position="99"/>
        <end position="112"/>
    </location>
</feature>
<feature type="helix" evidence="4">
    <location>
        <begin position="114"/>
        <end position="128"/>
    </location>
</feature>
<feature type="strand" evidence="4">
    <location>
        <begin position="130"/>
        <end position="132"/>
    </location>
</feature>
<feature type="helix" evidence="4">
    <location>
        <begin position="137"/>
        <end position="141"/>
    </location>
</feature>
<feature type="turn" evidence="4">
    <location>
        <begin position="145"/>
        <end position="147"/>
    </location>
</feature>
<feature type="strand" evidence="4">
    <location>
        <begin position="149"/>
        <end position="152"/>
    </location>
</feature>
<feature type="strand" evidence="2">
    <location>
        <begin position="160"/>
        <end position="162"/>
    </location>
</feature>
<feature type="helix" evidence="4">
    <location>
        <begin position="178"/>
        <end position="186"/>
    </location>
</feature>
<feature type="strand" evidence="4">
    <location>
        <begin position="191"/>
        <end position="196"/>
    </location>
</feature>
<feature type="helix" evidence="4">
    <location>
        <begin position="202"/>
        <end position="210"/>
    </location>
</feature>
<feature type="helix" evidence="4">
    <location>
        <begin position="212"/>
        <end position="216"/>
    </location>
</feature>
<feature type="strand" evidence="4">
    <location>
        <begin position="218"/>
        <end position="223"/>
    </location>
</feature>
<feature type="strand" evidence="4">
    <location>
        <begin position="235"/>
        <end position="238"/>
    </location>
</feature>
<feature type="strand" evidence="3">
    <location>
        <begin position="243"/>
        <end position="245"/>
    </location>
</feature>
<feature type="helix" evidence="4">
    <location>
        <begin position="246"/>
        <end position="249"/>
    </location>
</feature>
<feature type="strand" evidence="2">
    <location>
        <begin position="254"/>
        <end position="256"/>
    </location>
</feature>
<feature type="strand" evidence="4">
    <location>
        <begin position="260"/>
        <end position="264"/>
    </location>
</feature>
<feature type="helix" evidence="4">
    <location>
        <begin position="280"/>
        <end position="295"/>
    </location>
</feature>
<feature type="turn" evidence="3">
    <location>
        <begin position="296"/>
        <end position="299"/>
    </location>
</feature>
<feature type="strand" evidence="4">
    <location>
        <begin position="300"/>
        <end position="308"/>
    </location>
</feature>
<feature type="strand" evidence="4">
    <location>
        <begin position="314"/>
        <end position="324"/>
    </location>
</feature>
<feature type="strand" evidence="4">
    <location>
        <begin position="335"/>
        <end position="341"/>
    </location>
</feature>
<feature type="strand" evidence="4">
    <location>
        <begin position="357"/>
        <end position="362"/>
    </location>
</feature>
<feature type="helix" evidence="4">
    <location>
        <begin position="363"/>
        <end position="373"/>
    </location>
</feature>
<feature type="helix" evidence="4">
    <location>
        <begin position="380"/>
        <end position="391"/>
    </location>
</feature>
<feature type="strand" evidence="4">
    <location>
        <begin position="392"/>
        <end position="394"/>
    </location>
</feature>
<feature type="turn" evidence="4">
    <location>
        <begin position="397"/>
        <end position="399"/>
    </location>
</feature>
<feature type="strand" evidence="4">
    <location>
        <begin position="406"/>
        <end position="408"/>
    </location>
</feature>
<feature type="helix" evidence="4">
    <location>
        <begin position="415"/>
        <end position="417"/>
    </location>
</feature>
<feature type="helix" evidence="4">
    <location>
        <begin position="421"/>
        <end position="430"/>
    </location>
</feature>
<feature type="strand" evidence="4">
    <location>
        <begin position="432"/>
        <end position="437"/>
    </location>
</feature>
<feature type="helix" evidence="4">
    <location>
        <begin position="453"/>
        <end position="460"/>
    </location>
</feature>
<feature type="strand" evidence="4">
    <location>
        <begin position="466"/>
        <end position="469"/>
    </location>
</feature>
<feature type="helix" evidence="4">
    <location>
        <begin position="470"/>
        <end position="480"/>
    </location>
</feature>
<feature type="turn" evidence="4">
    <location>
        <begin position="482"/>
        <end position="484"/>
    </location>
</feature>
<feature type="helix" evidence="4">
    <location>
        <begin position="493"/>
        <end position="496"/>
    </location>
</feature>
<feature type="strand" evidence="4">
    <location>
        <begin position="499"/>
        <end position="503"/>
    </location>
</feature>
<feature type="turn" evidence="4">
    <location>
        <begin position="515"/>
        <end position="517"/>
    </location>
</feature>
<feature type="helix" evidence="4">
    <location>
        <begin position="523"/>
        <end position="533"/>
    </location>
</feature>
<feature type="helix" evidence="4">
    <location>
        <begin position="551"/>
        <end position="561"/>
    </location>
</feature>
<feature type="helix" evidence="4">
    <location>
        <begin position="568"/>
        <end position="576"/>
    </location>
</feature>
<feature type="strand" evidence="4">
    <location>
        <begin position="579"/>
        <end position="581"/>
    </location>
</feature>
<feature type="helix" evidence="4">
    <location>
        <begin position="584"/>
        <end position="586"/>
    </location>
</feature>
<feature type="turn" evidence="4">
    <location>
        <begin position="587"/>
        <end position="594"/>
    </location>
</feature>
<feature type="helix" evidence="4">
    <location>
        <begin position="612"/>
        <end position="625"/>
    </location>
</feature>
<feature type="strand" evidence="4">
    <location>
        <begin position="627"/>
        <end position="630"/>
    </location>
</feature>
<feature type="helix" evidence="4">
    <location>
        <begin position="635"/>
        <end position="641"/>
    </location>
</feature>
<organism>
    <name type="scientific">Bluetongue virus 10 (isolate USA)</name>
    <name type="common">BTV 10</name>
    <dbReference type="NCBI Taxonomy" id="10900"/>
    <lineage>
        <taxon>Viruses</taxon>
        <taxon>Riboviria</taxon>
        <taxon>Orthornavirae</taxon>
        <taxon>Duplornaviricota</taxon>
        <taxon>Resentoviricetes</taxon>
        <taxon>Reovirales</taxon>
        <taxon>Sedoreoviridae</taxon>
        <taxon>Orbivirus</taxon>
        <taxon>Bluetongue virus</taxon>
    </lineage>
</organism>
<comment type="function">
    <text>The VP4 protein is one of the five proteins (with VP1, VP3, VP6 and VP7) which form the inner capsid of the virus.</text>
</comment>
<comment type="subcellular location">
    <subcellularLocation>
        <location evidence="1">Virion</location>
    </subcellularLocation>
</comment>
<comment type="similarity">
    <text evidence="1">Belongs to the orbivirus VP4 family.</text>
</comment>
<evidence type="ECO:0000305" key="1"/>
<evidence type="ECO:0007829" key="2">
    <source>
        <dbReference type="PDB" id="2JH9"/>
    </source>
</evidence>
<evidence type="ECO:0007829" key="3">
    <source>
        <dbReference type="PDB" id="2JHA"/>
    </source>
</evidence>
<evidence type="ECO:0007829" key="4">
    <source>
        <dbReference type="PDB" id="2JHP"/>
    </source>
</evidence>
<protein>
    <recommendedName>
        <fullName>Core protein VP4</fullName>
    </recommendedName>
</protein>
<reference key="1">
    <citation type="journal article" date="1987" name="Nucleic Acids Res.">
        <title>Nucleotide sequence of the VP4 core protein gene (M4 RNA) of US bluetongue virus serotype 10.</title>
        <authorList>
            <person name="Yu Y."/>
            <person name="Fukusho A."/>
            <person name="Roy P."/>
        </authorList>
    </citation>
    <scope>NUCLEOTIDE SEQUENCE [MRNA]</scope>
</reference>
<reference key="2">
    <citation type="submission" date="2006-01" db="EMBL/GenBank/DDBJ databases">
        <authorList>
            <person name="Roy P."/>
        </authorList>
    </citation>
    <scope>SEQUENCE REVISION</scope>
</reference>
<accession>P07132</accession>
<dbReference type="EMBL" id="Y00421">
    <property type="protein sequence ID" value="CAA68483.2"/>
    <property type="molecule type" value="mRNA"/>
</dbReference>
<dbReference type="PIR" id="A26862">
    <property type="entry name" value="P4XRBV"/>
</dbReference>
<dbReference type="RefSeq" id="YP_052969.2">
    <property type="nucleotide sequence ID" value="NC_006024.2"/>
</dbReference>
<dbReference type="PDB" id="2JH8">
    <property type="method" value="X-ray"/>
    <property type="resolution" value="3.22 A"/>
    <property type="chains" value="A=1-644"/>
</dbReference>
<dbReference type="PDB" id="2JH9">
    <property type="method" value="X-ray"/>
    <property type="resolution" value="3.00 A"/>
    <property type="chains" value="A=1-644"/>
</dbReference>
<dbReference type="PDB" id="2JHA">
    <property type="method" value="X-ray"/>
    <property type="resolution" value="3.40 A"/>
    <property type="chains" value="A=1-644"/>
</dbReference>
<dbReference type="PDB" id="2JHC">
    <property type="method" value="X-ray"/>
    <property type="resolution" value="3.00 A"/>
    <property type="chains" value="A=1-644"/>
</dbReference>
<dbReference type="PDB" id="2JHP">
    <property type="method" value="X-ray"/>
    <property type="resolution" value="2.50 A"/>
    <property type="chains" value="A=1-644"/>
</dbReference>
<dbReference type="PDBsum" id="2JH8"/>
<dbReference type="PDBsum" id="2JH9"/>
<dbReference type="PDBsum" id="2JHA"/>
<dbReference type="PDBsum" id="2JHC"/>
<dbReference type="PDBsum" id="2JHP"/>
<dbReference type="SMR" id="P07132"/>
<dbReference type="KEGG" id="vg:2943157"/>
<dbReference type="EvolutionaryTrace" id="P07132"/>
<dbReference type="Proteomes" id="UP000007662">
    <property type="component" value="Genome"/>
</dbReference>
<dbReference type="GO" id="GO:0039624">
    <property type="term" value="C:viral outer capsid"/>
    <property type="evidence" value="ECO:0007669"/>
    <property type="project" value="UniProtKB-KW"/>
</dbReference>
<dbReference type="CDD" id="cd20758">
    <property type="entry name" value="capping_2-OMTase_Orbivirus"/>
    <property type="match status" value="1"/>
</dbReference>
<dbReference type="Gene3D" id="1.20.1280.200">
    <property type="entry name" value="Orbivirus VP4 core protein, C-terminal domain"/>
    <property type="match status" value="1"/>
</dbReference>
<dbReference type="Gene3D" id="3.40.50.150">
    <property type="entry name" value="Vaccinia Virus protein VP39"/>
    <property type="match status" value="1"/>
</dbReference>
<dbReference type="InterPro" id="IPR007753">
    <property type="entry name" value="Orbi_VP4"/>
</dbReference>
<dbReference type="InterPro" id="IPR043026">
    <property type="entry name" value="Orbi_VP4_C"/>
</dbReference>
<dbReference type="InterPro" id="IPR029063">
    <property type="entry name" value="SAM-dependent_MTases_sf"/>
</dbReference>
<dbReference type="Pfam" id="PF05059">
    <property type="entry name" value="Orbi_VP4"/>
    <property type="match status" value="1"/>
</dbReference>
<name>VP4_BTV10</name>
<keyword id="KW-0002">3D-structure</keyword>
<keyword id="KW-0167">Capsid protein</keyword>
<keyword id="KW-1152">Outer capsid protein</keyword>
<keyword id="KW-1185">Reference proteome</keyword>
<keyword id="KW-0946">Virion</keyword>
<sequence>MPEPHAVLYVTNELSHIVKDGFLPIWKLTGDESLNDLWLENGKYATDVYAYGDVSKWTIRQLRGHGFIFISTHKNVQLADIIKTVDVRIPREVARSHDMKAFENEIGRRRIRMRKGFGDALRNYAFKMAIEFHGSEAETLNDANPRLHKIYGMPEIPPLYMEYAEIGTRFDDEPTDEKLVSMLDYIVYSAEEVHYIGCGDLRTLMQFKKRSPGRFRRVLWHVYDPIAPECSDPNVIVHNIMVDSKKDILKHMNFLKRVERLFIWDVSSDRSQMNDHEWETTRFAEDRLGEEIAYEMGGAFSSALIKHRIPNSKDEYHCISTYLFPQPGADADMYELRNFMRLRGYSHVDRHMHPDASVTKVVSRDVRKMVELYHGRDRGRFLKKRLFEHLHIVRKNGLLHESDEPRADLFYLTNRCNMGLEPSIYEVMKKSVIATAWVGRAPLYDYDDFALPRSTVMLNGSYRDIRILDGNGAILFLMWRYPDIVKKDLTYDPAWAMNFAVSLKEPIPDPPVPDISLCRFIGLRVESSVLRVRNPTLHETADELKRMGLDLSGHLYVTLMSGAYVTDLFWWFKMILDWSAQNREQKLRDLKRSAAEVIEWKEQMAERPWHVRNDLIAALREYKRKMGMREGASIDSWLELLRHL</sequence>
<gene>
    <name type="primary">Segment-4</name>
</gene>